<proteinExistence type="evidence at protein level"/>
<reference key="1">
    <citation type="journal article" date="1981" name="Nucleic Acids Res.">
        <title>Use of a cloned double stranded cDNA coding for a major androgen dependent protein in rat seminal vesicle secretion: the effect of testosterone in gene expression.</title>
        <authorList>
            <person name="Mansson P.E."/>
            <person name="Sugino A."/>
            <person name="Harris S.E."/>
        </authorList>
    </citation>
    <scope>NUCLEOTIDE SEQUENCE [MRNA]</scope>
</reference>
<reference key="2">
    <citation type="journal article" date="1983" name="Proc. Natl. Acad. Sci. U.S.A.">
        <title>Seminal vesicle secretion IV gene: allelic difference due to a series of 20-base-pair direct tandem repeats within an intron.</title>
        <authorList>
            <person name="Harris S.E."/>
            <person name="Mansson P.-E."/>
            <person name="Tully D.B."/>
            <person name="Burkhart B."/>
        </authorList>
    </citation>
    <scope>NUCLEOTIDE SEQUENCE [GENOMIC DNA]</scope>
    <source>
        <strain>Sprague-Dawley</strain>
    </source>
</reference>
<reference key="3">
    <citation type="journal article" date="1984" name="EMBO J.">
        <title>Divergent protein coding regions in otherwise closely related androgen-regulated mRNAs.</title>
        <authorList>
            <person name="McDonald C.J."/>
            <person name="Eliopoulos E."/>
            <person name="Higgins S.J."/>
        </authorList>
    </citation>
    <scope>NUCLEOTIDE SEQUENCE [MRNA]</scope>
</reference>
<reference key="4">
    <citation type="journal article" date="1983" name="Nucleic Acids Res.">
        <title>Characterization of a genomic clone for rat seminal vesicle secretory protein IV.</title>
        <authorList>
            <person name="Kandala J.C."/>
            <person name="Kistler M.K."/>
            <person name="Lawther R.P."/>
            <person name="Kistler W.S."/>
        </authorList>
    </citation>
    <scope>NUCLEOTIDE SEQUENCE [GENOMIC DNA] OF 1-25</scope>
</reference>
<reference key="5">
    <citation type="journal article" date="1980" name="Int. J. Pept. Protein Res.">
        <title>Complete amino acid sequence of a major secretory protein from rat seminal vesicle.</title>
        <authorList>
            <person name="Pan Y.-C.E."/>
            <person name="Silverberg A.B."/>
            <person name="Harris S.E."/>
            <person name="Li S.S.-L."/>
        </authorList>
    </citation>
    <scope>PROTEIN SEQUENCE OF 22-112</scope>
</reference>
<gene>
    <name type="primary">Svs4</name>
    <name type="synonym">Svp2</name>
    <name type="synonym">Svp4</name>
</gene>
<feature type="signal peptide" evidence="2">
    <location>
        <begin position="1"/>
        <end position="21"/>
    </location>
</feature>
<feature type="chain" id="PRO_0000022453" description="Seminal vesicle secretory protein 4">
    <location>
        <begin position="22"/>
        <end position="112"/>
    </location>
</feature>
<feature type="region of interest" description="Disordered" evidence="1">
    <location>
        <begin position="26"/>
        <end position="112"/>
    </location>
</feature>
<feature type="compositionally biased region" description="Low complexity" evidence="1">
    <location>
        <begin position="36"/>
        <end position="47"/>
    </location>
</feature>
<feature type="compositionally biased region" description="Low complexity" evidence="1">
    <location>
        <begin position="85"/>
        <end position="97"/>
    </location>
</feature>
<feature type="sequence conflict" description="In Ref. 2; AAA42193." evidence="3" ref="2">
    <location>
        <position position="50"/>
    </location>
</feature>
<accession>P02783</accession>
<accession>Q64713</accession>
<sequence length="112" mass="12046">MKSTSLFLCSLLLLLVTGAIGRKTKEKYSQSEEVVSESFASGPSSGSSDDELVRDKPYGPKVSGGSFGEEASEEISSRRSKHISRSSGGSNMEGESSYAKKKRSRFAQDVLN</sequence>
<organism>
    <name type="scientific">Rattus norvegicus</name>
    <name type="common">Rat</name>
    <dbReference type="NCBI Taxonomy" id="10116"/>
    <lineage>
        <taxon>Eukaryota</taxon>
        <taxon>Metazoa</taxon>
        <taxon>Chordata</taxon>
        <taxon>Craniata</taxon>
        <taxon>Vertebrata</taxon>
        <taxon>Euteleostomi</taxon>
        <taxon>Mammalia</taxon>
        <taxon>Eutheria</taxon>
        <taxon>Euarchontoglires</taxon>
        <taxon>Glires</taxon>
        <taxon>Rodentia</taxon>
        <taxon>Myomorpha</taxon>
        <taxon>Muroidea</taxon>
        <taxon>Muridae</taxon>
        <taxon>Murinae</taxon>
        <taxon>Rattus</taxon>
    </lineage>
</organism>
<name>SVS4_RAT</name>
<dbReference type="EMBL" id="M25590">
    <property type="protein sequence ID" value="AAA40684.1"/>
    <property type="status" value="ALT_SEQ"/>
    <property type="molecule type" value="mRNA"/>
</dbReference>
<dbReference type="EMBL" id="M16069">
    <property type="protein sequence ID" value="AAA42193.1"/>
    <property type="molecule type" value="Genomic_DNA"/>
</dbReference>
<dbReference type="EMBL" id="X01114">
    <property type="protein sequence ID" value="CAA25584.1"/>
    <property type="molecule type" value="mRNA"/>
</dbReference>
<dbReference type="EMBL" id="X01575">
    <property type="protein sequence ID" value="CAA25730.1"/>
    <property type="molecule type" value="Genomic_DNA"/>
</dbReference>
<dbReference type="EMBL" id="M10097">
    <property type="protein sequence ID" value="AAA42194.1"/>
    <property type="molecule type" value="Genomic_DNA"/>
</dbReference>
<dbReference type="PIR" id="A93975">
    <property type="entry name" value="SQRTSV"/>
</dbReference>
<dbReference type="PIR" id="I58340">
    <property type="entry name" value="I58340"/>
</dbReference>
<dbReference type="RefSeq" id="NP_036794.1">
    <property type="nucleotide sequence ID" value="NM_012662.3"/>
</dbReference>
<dbReference type="RefSeq" id="XP_008760772.1">
    <property type="nucleotide sequence ID" value="XM_008762550.2"/>
</dbReference>
<dbReference type="RefSeq" id="XP_008772092.1">
    <property type="nucleotide sequence ID" value="XM_008773870.2"/>
</dbReference>
<dbReference type="RefSeq" id="XP_017458172.1">
    <property type="nucleotide sequence ID" value="XM_017602683.1"/>
</dbReference>
<dbReference type="STRING" id="10116.ENSRNOP00000018456"/>
<dbReference type="GlyGen" id="P02783">
    <property type="glycosylation" value="1 site"/>
</dbReference>
<dbReference type="iPTMnet" id="P02783"/>
<dbReference type="PhosphoSitePlus" id="P02783"/>
<dbReference type="PaxDb" id="10116-ENSRNOP00000018456"/>
<dbReference type="GeneID" id="24802"/>
<dbReference type="KEGG" id="rno:24802"/>
<dbReference type="UCSC" id="RGD:3791">
    <property type="organism name" value="rat"/>
</dbReference>
<dbReference type="AGR" id="RGD:3791"/>
<dbReference type="CTD" id="20941"/>
<dbReference type="RGD" id="3791">
    <property type="gene designation" value="Svs4"/>
</dbReference>
<dbReference type="InParanoid" id="P02783"/>
<dbReference type="TreeFam" id="TF353660"/>
<dbReference type="PRO" id="PR:P02783"/>
<dbReference type="Proteomes" id="UP000002494">
    <property type="component" value="Unplaced"/>
</dbReference>
<dbReference type="GO" id="GO:0005615">
    <property type="term" value="C:extracellular space"/>
    <property type="evidence" value="ECO:0000314"/>
    <property type="project" value="CAFA"/>
</dbReference>
<dbReference type="GO" id="GO:0032991">
    <property type="term" value="C:protein-containing complex"/>
    <property type="evidence" value="ECO:0000314"/>
    <property type="project" value="CAFA"/>
</dbReference>
<dbReference type="GO" id="GO:0042802">
    <property type="term" value="F:identical protein binding"/>
    <property type="evidence" value="ECO:0000314"/>
    <property type="project" value="CAFA"/>
</dbReference>
<dbReference type="DisProt" id="DP00527"/>
<dbReference type="InterPro" id="IPR035409">
    <property type="entry name" value="Svs4/5/6"/>
</dbReference>
<dbReference type="PANTHER" id="PTHR17498:SF2">
    <property type="entry name" value="SEMINAL VESICLE SECRETORY PROTEIN 4"/>
    <property type="match status" value="1"/>
</dbReference>
<dbReference type="PANTHER" id="PTHR17498">
    <property type="entry name" value="SEMINAL VESICLE SECRETORY PROTEIN 6-RELATED"/>
    <property type="match status" value="1"/>
</dbReference>
<dbReference type="Pfam" id="PF17381">
    <property type="entry name" value="Svs_4_5_6"/>
    <property type="match status" value="1"/>
</dbReference>
<protein>
    <recommendedName>
        <fullName>Seminal vesicle secretory protein 4</fullName>
    </recommendedName>
    <alternativeName>
        <fullName>Androgen-dependent protein</fullName>
        <shortName>ADP</shortName>
    </alternativeName>
    <alternativeName>
        <fullName>Seminal vesicle protein 2</fullName>
    </alternativeName>
    <alternativeName>
        <fullName>Seminal vesicle secretory protein IV</fullName>
        <shortName>SVS IV</shortName>
        <shortName>SVS protein S</shortName>
    </alternativeName>
</protein>
<comment type="subcellular location">
    <subcellularLocation>
        <location>Secreted</location>
        <location>Extracellular space</location>
    </subcellularLocation>
</comment>
<comment type="tissue specificity">
    <text>Testis.</text>
</comment>
<comment type="induction">
    <text>By testosterone.</text>
</comment>
<comment type="similarity">
    <text evidence="3">Belongs to the SVP2/SVP5/SVP6 family.</text>
</comment>
<evidence type="ECO:0000256" key="1">
    <source>
        <dbReference type="SAM" id="MobiDB-lite"/>
    </source>
</evidence>
<evidence type="ECO:0000269" key="2">
    <source>
    </source>
</evidence>
<evidence type="ECO:0000305" key="3"/>
<keyword id="KW-0903">Direct protein sequencing</keyword>
<keyword id="KW-1185">Reference proteome</keyword>
<keyword id="KW-0964">Secreted</keyword>
<keyword id="KW-0732">Signal</keyword>